<protein>
    <recommendedName>
        <fullName evidence="5">Zinc finger chaperone ZPR1</fullName>
    </recommendedName>
</protein>
<comment type="function">
    <text evidence="3">Acts as a protein folding chaperone for elongation factor 1-alpha.</text>
</comment>
<comment type="subunit">
    <text evidence="3 4">Interacts with elongation factor 1-alpha.</text>
</comment>
<comment type="subcellular location">
    <subcellularLocation>
        <location evidence="4">Cytoplasm</location>
    </subcellularLocation>
    <subcellularLocation>
        <location evidence="4">Nucleus</location>
    </subcellularLocation>
    <text evidence="4">Translocates to the nucleus after nutrient stimulation.</text>
</comment>
<comment type="disruption phenotype">
    <text evidence="3">Leads to misfolding of elongation factor 1-alpha resulting in proteotoxic stress, accumulation of cytosolic protein aggregates, increased expression of heat shock transcription factor HSF1, and inhibition of protein synthesis (PubMed:36630955). Inviable (PubMed:36630955).</text>
</comment>
<comment type="miscellaneous">
    <text evidence="2">Present with 39900 molecules/cell in log phase SD medium.</text>
</comment>
<comment type="similarity">
    <text evidence="5">Belongs to the ZPR1 family.</text>
</comment>
<comment type="sequence caution" evidence="5">
    <conflict type="frameshift">
        <sequence resource="EMBL-CDS" id="AAA85586"/>
    </conflict>
</comment>
<comment type="sequence caution" evidence="5">
    <conflict type="frameshift">
        <sequence resource="EMBL-CDS" id="AAA85587"/>
    </conflict>
</comment>
<proteinExistence type="evidence at protein level"/>
<accession>P53303</accession>
<accession>D6VUZ4</accession>
<accession>Q02807</accession>
<accession>Q02808</accession>
<keyword id="KW-0143">Chaperone</keyword>
<keyword id="KW-0963">Cytoplasm</keyword>
<keyword id="KW-0479">Metal-binding</keyword>
<keyword id="KW-0539">Nucleus</keyword>
<keyword id="KW-0597">Phosphoprotein</keyword>
<keyword id="KW-1185">Reference proteome</keyword>
<keyword id="KW-0677">Repeat</keyword>
<keyword id="KW-0862">Zinc</keyword>
<keyword id="KW-0863">Zinc-finger</keyword>
<organism>
    <name type="scientific">Saccharomyces cerevisiae (strain ATCC 204508 / S288c)</name>
    <name type="common">Baker's yeast</name>
    <dbReference type="NCBI Taxonomy" id="559292"/>
    <lineage>
        <taxon>Eukaryota</taxon>
        <taxon>Fungi</taxon>
        <taxon>Dikarya</taxon>
        <taxon>Ascomycota</taxon>
        <taxon>Saccharomycotina</taxon>
        <taxon>Saccharomycetes</taxon>
        <taxon>Saccharomycetales</taxon>
        <taxon>Saccharomycetaceae</taxon>
        <taxon>Saccharomyces</taxon>
    </lineage>
</organism>
<dbReference type="EMBL" id="AF019769">
    <property type="protein sequence ID" value="AAC33516.1"/>
    <property type="molecule type" value="Genomic_DNA"/>
</dbReference>
<dbReference type="EMBL" id="Z72996">
    <property type="protein sequence ID" value="CAA97238.1"/>
    <property type="molecule type" value="Genomic_DNA"/>
</dbReference>
<dbReference type="EMBL" id="U40843">
    <property type="protein sequence ID" value="AAA85586.1"/>
    <property type="status" value="ALT_FRAME"/>
    <property type="molecule type" value="Genomic_DNA"/>
</dbReference>
<dbReference type="EMBL" id="U40843">
    <property type="protein sequence ID" value="AAA85587.1"/>
    <property type="status" value="ALT_FRAME"/>
    <property type="molecule type" value="Genomic_DNA"/>
</dbReference>
<dbReference type="EMBL" id="BK006941">
    <property type="protein sequence ID" value="DAA08305.1"/>
    <property type="molecule type" value="Genomic_DNA"/>
</dbReference>
<dbReference type="PIR" id="S64534">
    <property type="entry name" value="S64534"/>
</dbReference>
<dbReference type="RefSeq" id="NP_011727.3">
    <property type="nucleotide sequence ID" value="NM_001181340.3"/>
</dbReference>
<dbReference type="SMR" id="P53303"/>
<dbReference type="BioGRID" id="33464">
    <property type="interactions" value="286"/>
</dbReference>
<dbReference type="DIP" id="DIP-4419N"/>
<dbReference type="FunCoup" id="P53303">
    <property type="interactions" value="1189"/>
</dbReference>
<dbReference type="IntAct" id="P53303">
    <property type="interactions" value="9"/>
</dbReference>
<dbReference type="MINT" id="P53303"/>
<dbReference type="STRING" id="4932.YGR211W"/>
<dbReference type="iPTMnet" id="P53303"/>
<dbReference type="PaxDb" id="4932-YGR211W"/>
<dbReference type="PeptideAtlas" id="P53303"/>
<dbReference type="EnsemblFungi" id="YGR211W_mRNA">
    <property type="protein sequence ID" value="YGR211W"/>
    <property type="gene ID" value="YGR211W"/>
</dbReference>
<dbReference type="GeneID" id="853125"/>
<dbReference type="KEGG" id="sce:YGR211W"/>
<dbReference type="AGR" id="SGD:S000003443"/>
<dbReference type="SGD" id="S000003443">
    <property type="gene designation" value="ZPR1"/>
</dbReference>
<dbReference type="VEuPathDB" id="FungiDB:YGR211W"/>
<dbReference type="eggNOG" id="KOG2703">
    <property type="taxonomic scope" value="Eukaryota"/>
</dbReference>
<dbReference type="GeneTree" id="ENSGT00390000005306"/>
<dbReference type="HOGENOM" id="CLU_024138_5_0_1"/>
<dbReference type="InParanoid" id="P53303"/>
<dbReference type="OMA" id="FREVVIM"/>
<dbReference type="OrthoDB" id="308464at2759"/>
<dbReference type="BioCyc" id="YEAST:G3O-30893-MONOMER"/>
<dbReference type="BioGRID-ORCS" id="853125">
    <property type="hits" value="2 hits in 10 CRISPR screens"/>
</dbReference>
<dbReference type="PRO" id="PR:P53303"/>
<dbReference type="Proteomes" id="UP000002311">
    <property type="component" value="Chromosome VII"/>
</dbReference>
<dbReference type="RNAct" id="P53303">
    <property type="molecule type" value="protein"/>
</dbReference>
<dbReference type="GO" id="GO:0005737">
    <property type="term" value="C:cytoplasm"/>
    <property type="evidence" value="ECO:0000314"/>
    <property type="project" value="SGD"/>
</dbReference>
<dbReference type="GO" id="GO:0005634">
    <property type="term" value="C:nucleus"/>
    <property type="evidence" value="ECO:0000314"/>
    <property type="project" value="SGD"/>
</dbReference>
<dbReference type="GO" id="GO:0044183">
    <property type="term" value="F:protein folding chaperone"/>
    <property type="evidence" value="ECO:0000314"/>
    <property type="project" value="UniProtKB"/>
</dbReference>
<dbReference type="GO" id="GO:0061770">
    <property type="term" value="F:translation elongation factor binding"/>
    <property type="evidence" value="ECO:0000314"/>
    <property type="project" value="SGD"/>
</dbReference>
<dbReference type="GO" id="GO:0008270">
    <property type="term" value="F:zinc ion binding"/>
    <property type="evidence" value="ECO:0007669"/>
    <property type="project" value="UniProtKB-KW"/>
</dbReference>
<dbReference type="GO" id="GO:0006458">
    <property type="term" value="P:'de novo' protein folding"/>
    <property type="evidence" value="ECO:0000315"/>
    <property type="project" value="SGD"/>
</dbReference>
<dbReference type="GO" id="GO:0000086">
    <property type="term" value="P:G2/M transition of mitotic cell cycle"/>
    <property type="evidence" value="ECO:0000315"/>
    <property type="project" value="SGD"/>
</dbReference>
<dbReference type="GO" id="GO:0006457">
    <property type="term" value="P:protein folding"/>
    <property type="evidence" value="ECO:0000314"/>
    <property type="project" value="UniProtKB"/>
</dbReference>
<dbReference type="GO" id="GO:0009749">
    <property type="term" value="P:response to glucose"/>
    <property type="evidence" value="ECO:0000314"/>
    <property type="project" value="UniProtKB"/>
</dbReference>
<dbReference type="FunFam" id="2.20.25.420:FF:000001">
    <property type="entry name" value="Zinc finger protein ZPR1"/>
    <property type="match status" value="1"/>
</dbReference>
<dbReference type="FunFam" id="2.20.25.420:FF:000002">
    <property type="entry name" value="Zinc finger protein ZPR1"/>
    <property type="match status" value="1"/>
</dbReference>
<dbReference type="FunFam" id="2.60.120.1040:FF:000001">
    <property type="entry name" value="Zinc finger protein ZPR1"/>
    <property type="match status" value="1"/>
</dbReference>
<dbReference type="FunFam" id="2.60.120.1040:FF:000003">
    <property type="entry name" value="Zinc finger protein zpr1"/>
    <property type="match status" value="1"/>
</dbReference>
<dbReference type="Gene3D" id="2.60.120.1040">
    <property type="entry name" value="ZPR1, A/B domain"/>
    <property type="match status" value="2"/>
</dbReference>
<dbReference type="Gene3D" id="2.20.25.420">
    <property type="entry name" value="ZPR1, zinc finger domain"/>
    <property type="match status" value="2"/>
</dbReference>
<dbReference type="InterPro" id="IPR004457">
    <property type="entry name" value="Znf_ZPR1"/>
</dbReference>
<dbReference type="InterPro" id="IPR040141">
    <property type="entry name" value="ZPR1"/>
</dbReference>
<dbReference type="InterPro" id="IPR042451">
    <property type="entry name" value="ZPR1_A/B_dom"/>
</dbReference>
<dbReference type="InterPro" id="IPR056180">
    <property type="entry name" value="ZPR1_jr_dom"/>
</dbReference>
<dbReference type="InterPro" id="IPR042452">
    <property type="entry name" value="ZPR1_Znf1/2"/>
</dbReference>
<dbReference type="NCBIfam" id="TIGR00310">
    <property type="entry name" value="ZPR1_znf"/>
    <property type="match status" value="2"/>
</dbReference>
<dbReference type="PANTHER" id="PTHR10876">
    <property type="entry name" value="ZINC FINGER PROTEIN ZPR1"/>
    <property type="match status" value="1"/>
</dbReference>
<dbReference type="PANTHER" id="PTHR10876:SF0">
    <property type="entry name" value="ZINC FINGER PROTEIN ZPR1"/>
    <property type="match status" value="1"/>
</dbReference>
<dbReference type="Pfam" id="PF22794">
    <property type="entry name" value="jr-ZPR1"/>
    <property type="match status" value="2"/>
</dbReference>
<dbReference type="Pfam" id="PF03367">
    <property type="entry name" value="Zn_ribbon_ZPR1"/>
    <property type="match status" value="2"/>
</dbReference>
<dbReference type="SMART" id="SM00709">
    <property type="entry name" value="Zpr1"/>
    <property type="match status" value="2"/>
</dbReference>
<sequence>MSEQKEDLFKPVGEAAAEVEDESIAEQNKANDGVKLTGAQDAMGHPVQEIESLCMNCGKNGTTRLLLTSIPYFREIIIMSFDCPHCGFKNCEIQPASQIQEKGSRYVLKVECREDFNRQVIKSETATCKFVELDIEIPAKRGQLTTVEGLLSEMIDDLSQDQEMRKSIDEALYKKIDDFIQKVKSYINCEPNTIPITFILDDPAGNSWIEYKPGEPQHKWSHTQYVRTDEQNVQVGIITRDQLEQRRQEQLKQLANRERNPSESVKVGSANPQFLSDATDIENFNNEVQTFRASCPSCTQECETHMKPVNIPHFKEVIIMSTVCDHCGYKSNEVKTGGAIPDKGRRITLYCDDAADLSRDILKSETCSMVIPELHLDIQEGTLGGRFTTLEGLLRQVYEELESRIFTQTSDSMDEATKARWVEFFAKLKEAIAGKVKFTVIMEDPLAGSYIQNVYAPDPDPNMTIEDYERTKEQNEDLGLSDIKVE</sequence>
<reference key="1">
    <citation type="journal article" date="1998" name="J. Cell Biol.">
        <title>Interaction of ZPR1 with translation elongation factor-1alpha in proliferating cells.</title>
        <authorList>
            <person name="Gangwani L."/>
            <person name="Mikrut M."/>
            <person name="Galcheva-Gargova Z."/>
            <person name="Davis R.J."/>
        </authorList>
    </citation>
    <scope>NUCLEOTIDE SEQUENCE [GENOMIC DNA]</scope>
    <scope>INTERACTION WITH ELONGATION FACTOR 1-ALPHA</scope>
    <scope>SUBCELLULAR LOCATION</scope>
</reference>
<reference key="2">
    <citation type="journal article" date="1997" name="Yeast">
        <title>Sequence analysis of 203 kilobases from Saccharomyces cerevisiae chromosome VII.</title>
        <authorList>
            <person name="Rieger M."/>
            <person name="Brueckner M."/>
            <person name="Schaefer M."/>
            <person name="Mueller-Auer S."/>
        </authorList>
    </citation>
    <scope>NUCLEOTIDE SEQUENCE [GENOMIC DNA]</scope>
    <source>
        <strain>ATCC 204508 / S288c</strain>
    </source>
</reference>
<reference key="3">
    <citation type="journal article" date="1997" name="Nature">
        <title>The nucleotide sequence of Saccharomyces cerevisiae chromosome VII.</title>
        <authorList>
            <person name="Tettelin H."/>
            <person name="Agostoni-Carbone M.L."/>
            <person name="Albermann K."/>
            <person name="Albers M."/>
            <person name="Arroyo J."/>
            <person name="Backes U."/>
            <person name="Barreiros T."/>
            <person name="Bertani I."/>
            <person name="Bjourson A.J."/>
            <person name="Brueckner M."/>
            <person name="Bruschi C.V."/>
            <person name="Carignani G."/>
            <person name="Castagnoli L."/>
            <person name="Cerdan E."/>
            <person name="Clemente M.L."/>
            <person name="Coblenz A."/>
            <person name="Coglievina M."/>
            <person name="Coissac E."/>
            <person name="Defoor E."/>
            <person name="Del Bino S."/>
            <person name="Delius H."/>
            <person name="Delneri D."/>
            <person name="de Wergifosse P."/>
            <person name="Dujon B."/>
            <person name="Durand P."/>
            <person name="Entian K.-D."/>
            <person name="Eraso P."/>
            <person name="Escribano V."/>
            <person name="Fabiani L."/>
            <person name="Fartmann B."/>
            <person name="Feroli F."/>
            <person name="Feuermann M."/>
            <person name="Frontali L."/>
            <person name="Garcia-Gonzalez M."/>
            <person name="Garcia-Saez M.I."/>
            <person name="Goffeau A."/>
            <person name="Guerreiro P."/>
            <person name="Hani J."/>
            <person name="Hansen M."/>
            <person name="Hebling U."/>
            <person name="Hernandez K."/>
            <person name="Heumann K."/>
            <person name="Hilger F."/>
            <person name="Hofmann B."/>
            <person name="Indge K.J."/>
            <person name="James C.M."/>
            <person name="Klima R."/>
            <person name="Koetter P."/>
            <person name="Kramer B."/>
            <person name="Kramer W."/>
            <person name="Lauquin G."/>
            <person name="Leuther H."/>
            <person name="Louis E.J."/>
            <person name="Maillier E."/>
            <person name="Marconi A."/>
            <person name="Martegani E."/>
            <person name="Mazon M.J."/>
            <person name="Mazzoni C."/>
            <person name="McReynolds A.D.K."/>
            <person name="Melchioretto P."/>
            <person name="Mewes H.-W."/>
            <person name="Minenkova O."/>
            <person name="Mueller-Auer S."/>
            <person name="Nawrocki A."/>
            <person name="Netter P."/>
            <person name="Neu R."/>
            <person name="Nombela C."/>
            <person name="Oliver S.G."/>
            <person name="Panzeri L."/>
            <person name="Paoluzi S."/>
            <person name="Plevani P."/>
            <person name="Portetelle D."/>
            <person name="Portillo F."/>
            <person name="Potier S."/>
            <person name="Purnelle B."/>
            <person name="Rieger M."/>
            <person name="Riles L."/>
            <person name="Rinaldi T."/>
            <person name="Robben J."/>
            <person name="Rodrigues-Pousada C."/>
            <person name="Rodriguez-Belmonte E."/>
            <person name="Rodriguez-Torres A.M."/>
            <person name="Rose M."/>
            <person name="Ruzzi M."/>
            <person name="Saliola M."/>
            <person name="Sanchez-Perez M."/>
            <person name="Schaefer B."/>
            <person name="Schaefer M."/>
            <person name="Scharfe M."/>
            <person name="Schmidheini T."/>
            <person name="Schreer A."/>
            <person name="Skala J."/>
            <person name="Souciet J.-L."/>
            <person name="Steensma H.Y."/>
            <person name="Talla E."/>
            <person name="Thierry A."/>
            <person name="Vandenbol M."/>
            <person name="van der Aart Q.J.M."/>
            <person name="Van Dyck L."/>
            <person name="Vanoni M."/>
            <person name="Verhasselt P."/>
            <person name="Voet M."/>
            <person name="Volckaert G."/>
            <person name="Wambutt R."/>
            <person name="Watson M.D."/>
            <person name="Weber N."/>
            <person name="Wedler E."/>
            <person name="Wedler H."/>
            <person name="Wipfli P."/>
            <person name="Wolf K."/>
            <person name="Wright L.F."/>
            <person name="Zaccaria P."/>
            <person name="Zimmermann M."/>
            <person name="Zollner A."/>
            <person name="Kleine K."/>
        </authorList>
    </citation>
    <scope>NUCLEOTIDE SEQUENCE [LARGE SCALE GENOMIC DNA]</scope>
    <source>
        <strain>ATCC 204508 / S288c</strain>
    </source>
</reference>
<reference key="4">
    <citation type="journal article" date="2014" name="G3 (Bethesda)">
        <title>The reference genome sequence of Saccharomyces cerevisiae: Then and now.</title>
        <authorList>
            <person name="Engel S.R."/>
            <person name="Dietrich F.S."/>
            <person name="Fisk D.G."/>
            <person name="Binkley G."/>
            <person name="Balakrishnan R."/>
            <person name="Costanzo M.C."/>
            <person name="Dwight S.S."/>
            <person name="Hitz B.C."/>
            <person name="Karra K."/>
            <person name="Nash R.S."/>
            <person name="Weng S."/>
            <person name="Wong E.D."/>
            <person name="Lloyd P."/>
            <person name="Skrzypek M.S."/>
            <person name="Miyasato S.R."/>
            <person name="Simison M."/>
            <person name="Cherry J.M."/>
        </authorList>
    </citation>
    <scope>GENOME REANNOTATION</scope>
    <source>
        <strain>ATCC 204508 / S288c</strain>
    </source>
</reference>
<reference key="5">
    <citation type="submission" date="1995-11" db="EMBL/GenBank/DDBJ databases">
        <title>Analysis of the 15.6-kb fragment encompassing the ADE3 gene.</title>
        <authorList>
            <person name="Song J.M."/>
            <person name="Cheung E."/>
            <person name="Rabinowitz J.C."/>
        </authorList>
    </citation>
    <scope>NUCLEOTIDE SEQUENCE [GENOMIC DNA] OF 1-459</scope>
    <source>
        <strain>S288c / GRF88</strain>
    </source>
</reference>
<reference key="6">
    <citation type="journal article" date="2003" name="Nature">
        <title>Global analysis of protein expression in yeast.</title>
        <authorList>
            <person name="Ghaemmaghami S."/>
            <person name="Huh W.-K."/>
            <person name="Bower K."/>
            <person name="Howson R.W."/>
            <person name="Belle A."/>
            <person name="Dephoure N."/>
            <person name="O'Shea E.K."/>
            <person name="Weissman J.S."/>
        </authorList>
    </citation>
    <scope>LEVEL OF PROTEIN EXPRESSION [LARGE SCALE ANALYSIS]</scope>
</reference>
<reference key="7">
    <citation type="journal article" date="2008" name="Mol. Cell. Proteomics">
        <title>A multidimensional chromatography technology for in-depth phosphoproteome analysis.</title>
        <authorList>
            <person name="Albuquerque C.P."/>
            <person name="Smolka M.B."/>
            <person name="Payne S.H."/>
            <person name="Bafna V."/>
            <person name="Eng J."/>
            <person name="Zhou H."/>
        </authorList>
    </citation>
    <scope>PHOSPHORYLATION [LARGE SCALE ANALYSIS] AT THR-407</scope>
    <scope>IDENTIFICATION BY MASS SPECTROMETRY [LARGE SCALE ANALYSIS]</scope>
</reference>
<reference key="8">
    <citation type="journal article" date="2009" name="Science">
        <title>Global analysis of Cdk1 substrate phosphorylation sites provides insights into evolution.</title>
        <authorList>
            <person name="Holt L.J."/>
            <person name="Tuch B.B."/>
            <person name="Villen J."/>
            <person name="Johnson A.D."/>
            <person name="Gygi S.P."/>
            <person name="Morgan D.O."/>
        </authorList>
    </citation>
    <scope>PHOSPHORYLATION [LARGE SCALE ANALYSIS] AT SER-23</scope>
    <scope>IDENTIFICATION BY MASS SPECTROMETRY [LARGE SCALE ANALYSIS]</scope>
</reference>
<reference key="9">
    <citation type="journal article" date="2023" name="Mol. Cell">
        <title>Zinc-finger protein Zpr1 is a bespoke chaperone essential for eEF1A biogenesis.</title>
        <authorList>
            <person name="Sabbarini I.M."/>
            <person name="Reif D."/>
            <person name="McQuown A.J."/>
            <person name="Nelliat A.R."/>
            <person name="Prince J."/>
            <person name="Membreno B.S."/>
            <person name="Wu C.C."/>
            <person name="Murray A.W."/>
            <person name="Denic V."/>
        </authorList>
    </citation>
    <scope>FUNCTION</scope>
    <scope>INTERACTION WITH ELONGATION FACTOR 1-ALPHA</scope>
    <scope>DISRUPTION PHENOTYPE</scope>
</reference>
<gene>
    <name evidence="6" type="primary">ZPR1</name>
    <name evidence="6" type="ordered locus">YGR211W</name>
</gene>
<evidence type="ECO:0000256" key="1">
    <source>
        <dbReference type="SAM" id="MobiDB-lite"/>
    </source>
</evidence>
<evidence type="ECO:0000269" key="2">
    <source>
    </source>
</evidence>
<evidence type="ECO:0000269" key="3">
    <source>
    </source>
</evidence>
<evidence type="ECO:0000269" key="4">
    <source>
    </source>
</evidence>
<evidence type="ECO:0000305" key="5"/>
<evidence type="ECO:0000312" key="6">
    <source>
        <dbReference type="SGD" id="S000003443"/>
    </source>
</evidence>
<evidence type="ECO:0007744" key="7">
    <source>
    </source>
</evidence>
<evidence type="ECO:0007744" key="8">
    <source>
    </source>
</evidence>
<name>ZPR1_YEAST</name>
<feature type="chain" id="PRO_0000119040" description="Zinc finger chaperone ZPR1">
    <location>
        <begin position="1"/>
        <end position="486"/>
    </location>
</feature>
<feature type="zinc finger region" description="C4-type 1">
    <location>
        <begin position="54"/>
        <end position="86"/>
    </location>
</feature>
<feature type="zinc finger region" description="C4-type 2">
    <location>
        <begin position="295"/>
        <end position="327"/>
    </location>
</feature>
<feature type="region of interest" description="Disordered" evidence="1">
    <location>
        <begin position="1"/>
        <end position="31"/>
    </location>
</feature>
<feature type="modified residue" description="Phosphoserine" evidence="8">
    <location>
        <position position="23"/>
    </location>
</feature>
<feature type="modified residue" description="Phosphothreonine" evidence="7">
    <location>
        <position position="407"/>
    </location>
</feature>